<evidence type="ECO:0000250" key="1"/>
<evidence type="ECO:0000255" key="2">
    <source>
        <dbReference type="PROSITE-ProRule" id="PRU00223"/>
    </source>
</evidence>
<evidence type="ECO:0000256" key="3">
    <source>
        <dbReference type="SAM" id="MobiDB-lite"/>
    </source>
</evidence>
<evidence type="ECO:0000305" key="4"/>
<gene>
    <name type="primary">WRKY38</name>
    <name type="ordered locus">At5g22570</name>
    <name type="ORF">MQJ16.11</name>
</gene>
<accession>Q8GWF1</accession>
<accession>Q9FK82</accession>
<keyword id="KW-0238">DNA-binding</keyword>
<keyword id="KW-0539">Nucleus</keyword>
<keyword id="KW-1185">Reference proteome</keyword>
<keyword id="KW-0804">Transcription</keyword>
<keyword id="KW-0805">Transcription regulation</keyword>
<name>WRK38_ARATH</name>
<sequence>MEMNSPHEKAVQAIRYGHSCAMRLKRRLNHPMADGGPLSSYDLAKSIVESFSNAISILSAKPETEDDQFSDLSSRDSSPPPQGSPSKKRKIDSTNSSENWRDDSPDPIYYDGYLWRKYGQKSIKKSNHQRSYYRCSYNKDHNCEARKHEQKIKDNPPVYRTTYFGHHTCKTEHNLDAIFIAGQDPLDDFKSTQMIRFGKDQDQEKESRSNGFSLSVKHEEDIIKEQAIDQYREITSNDQDCQDVIEEYLSSPSGSYPPSSSSGSESADFNSDLLFDNPDSWDRYDQFYF</sequence>
<reference key="1">
    <citation type="journal article" date="1998" name="DNA Res.">
        <title>Structural analysis of Arabidopsis thaliana chromosome 5. VI. Sequence features of the regions of 1,367,185 bp covered by 19 physically assigned P1 and TAC clones.</title>
        <authorList>
            <person name="Kotani H."/>
            <person name="Nakamura Y."/>
            <person name="Sato S."/>
            <person name="Asamizu E."/>
            <person name="Kaneko T."/>
            <person name="Miyajima N."/>
            <person name="Tabata S."/>
        </authorList>
    </citation>
    <scope>NUCLEOTIDE SEQUENCE [LARGE SCALE GENOMIC DNA]</scope>
    <source>
        <strain>cv. Columbia</strain>
    </source>
</reference>
<reference key="2">
    <citation type="journal article" date="2017" name="Plant J.">
        <title>Araport11: a complete reannotation of the Arabidopsis thaliana reference genome.</title>
        <authorList>
            <person name="Cheng C.Y."/>
            <person name="Krishnakumar V."/>
            <person name="Chan A.P."/>
            <person name="Thibaud-Nissen F."/>
            <person name="Schobel S."/>
            <person name="Town C.D."/>
        </authorList>
    </citation>
    <scope>GENOME REANNOTATION</scope>
    <source>
        <strain>cv. Columbia</strain>
    </source>
</reference>
<reference key="3">
    <citation type="journal article" date="2002" name="Science">
        <title>Functional annotation of a full-length Arabidopsis cDNA collection.</title>
        <authorList>
            <person name="Seki M."/>
            <person name="Narusaka M."/>
            <person name="Kamiya A."/>
            <person name="Ishida J."/>
            <person name="Satou M."/>
            <person name="Sakurai T."/>
            <person name="Nakajima M."/>
            <person name="Enju A."/>
            <person name="Akiyama K."/>
            <person name="Oono Y."/>
            <person name="Muramatsu M."/>
            <person name="Hayashizaki Y."/>
            <person name="Kawai J."/>
            <person name="Carninci P."/>
            <person name="Itoh M."/>
            <person name="Ishii Y."/>
            <person name="Arakawa T."/>
            <person name="Shibata K."/>
            <person name="Shinagawa A."/>
            <person name="Shinozaki K."/>
        </authorList>
    </citation>
    <scope>NUCLEOTIDE SEQUENCE [LARGE SCALE MRNA]</scope>
    <source>
        <strain>cv. Columbia</strain>
    </source>
</reference>
<reference key="4">
    <citation type="journal article" date="2003" name="Science">
        <title>Empirical analysis of transcriptional activity in the Arabidopsis genome.</title>
        <authorList>
            <person name="Yamada K."/>
            <person name="Lim J."/>
            <person name="Dale J.M."/>
            <person name="Chen H."/>
            <person name="Shinn P."/>
            <person name="Palm C.J."/>
            <person name="Southwick A.M."/>
            <person name="Wu H.C."/>
            <person name="Kim C.J."/>
            <person name="Nguyen M."/>
            <person name="Pham P.K."/>
            <person name="Cheuk R.F."/>
            <person name="Karlin-Newmann G."/>
            <person name="Liu S.X."/>
            <person name="Lam B."/>
            <person name="Sakano H."/>
            <person name="Wu T."/>
            <person name="Yu G."/>
            <person name="Miranda M."/>
            <person name="Quach H.L."/>
            <person name="Tripp M."/>
            <person name="Chang C.H."/>
            <person name="Lee J.M."/>
            <person name="Toriumi M.J."/>
            <person name="Chan M.M."/>
            <person name="Tang C.C."/>
            <person name="Onodera C.S."/>
            <person name="Deng J.M."/>
            <person name="Akiyama K."/>
            <person name="Ansari Y."/>
            <person name="Arakawa T."/>
            <person name="Banh J."/>
            <person name="Banno F."/>
            <person name="Bowser L."/>
            <person name="Brooks S.Y."/>
            <person name="Carninci P."/>
            <person name="Chao Q."/>
            <person name="Choy N."/>
            <person name="Enju A."/>
            <person name="Goldsmith A.D."/>
            <person name="Gurjal M."/>
            <person name="Hansen N.F."/>
            <person name="Hayashizaki Y."/>
            <person name="Johnson-Hopson C."/>
            <person name="Hsuan V.W."/>
            <person name="Iida K."/>
            <person name="Karnes M."/>
            <person name="Khan S."/>
            <person name="Koesema E."/>
            <person name="Ishida J."/>
            <person name="Jiang P.X."/>
            <person name="Jones T."/>
            <person name="Kawai J."/>
            <person name="Kamiya A."/>
            <person name="Meyers C."/>
            <person name="Nakajima M."/>
            <person name="Narusaka M."/>
            <person name="Seki M."/>
            <person name="Sakurai T."/>
            <person name="Satou M."/>
            <person name="Tamse R."/>
            <person name="Vaysberg M."/>
            <person name="Wallender E.K."/>
            <person name="Wong C."/>
            <person name="Yamamura Y."/>
            <person name="Yuan S."/>
            <person name="Shinozaki K."/>
            <person name="Davis R.W."/>
            <person name="Theologis A."/>
            <person name="Ecker J.R."/>
        </authorList>
    </citation>
    <scope>NUCLEOTIDE SEQUENCE [LARGE SCALE MRNA]</scope>
    <source>
        <strain>cv. Columbia</strain>
    </source>
</reference>
<reference key="5">
    <citation type="submission" date="2001-10" db="EMBL/GenBank/DDBJ databases">
        <title>Arabidopsis thaliana transcription factor WRKY38.</title>
        <authorList>
            <person name="Ulker B."/>
            <person name="Kushnir S."/>
            <person name="Somssich I.E."/>
        </authorList>
    </citation>
    <scope>NUCLEOTIDE SEQUENCE [MRNA] OF 3-289</scope>
    <source>
        <strain>cv. Columbia</strain>
        <tissue>Flower</tissue>
    </source>
</reference>
<feature type="chain" id="PRO_0000133679" description="Probable WRKY transcription factor 38">
    <location>
        <begin position="1"/>
        <end position="289"/>
    </location>
</feature>
<feature type="DNA-binding region" description="WRKY" evidence="2">
    <location>
        <begin position="104"/>
        <end position="172"/>
    </location>
</feature>
<feature type="region of interest" description="Disordered" evidence="3">
    <location>
        <begin position="62"/>
        <end position="103"/>
    </location>
</feature>
<feature type="region of interest" description="Disordered" evidence="3">
    <location>
        <begin position="249"/>
        <end position="278"/>
    </location>
</feature>
<feature type="compositionally biased region" description="Low complexity" evidence="3">
    <location>
        <begin position="249"/>
        <end position="266"/>
    </location>
</feature>
<proteinExistence type="evidence at protein level"/>
<comment type="function">
    <text evidence="1">Transcription factor. Interacts specifically with the W box (5'-(T)TGAC[CT]-3'), a frequently occurring elicitor-responsive cis-acting element (By similarity).</text>
</comment>
<comment type="interaction">
    <interactant intactId="EBI-1993263">
        <id>Q8GWF1</id>
    </interactant>
    <interactant intactId="EBI-1799262">
        <id>Q94JM3</id>
        <label>ARF2</label>
    </interactant>
    <organismsDiffer>false</organismsDiffer>
    <experiments>3</experiments>
</comment>
<comment type="interaction">
    <interactant intactId="EBI-1993263">
        <id>Q8GWF1</id>
    </interactant>
    <interactant intactId="EBI-1100737">
        <id>Q8L9Y3</id>
        <label>ARR14</label>
    </interactant>
    <organismsDiffer>false</organismsDiffer>
    <experiments>3</experiments>
</comment>
<comment type="interaction">
    <interactant intactId="EBI-1993263">
        <id>Q8GWF1</id>
    </interactant>
    <interactant intactId="EBI-593040">
        <id>O22446</id>
        <label>HDA19</label>
    </interactant>
    <organismsDiffer>false</organismsDiffer>
    <experiments>2</experiments>
</comment>
<comment type="interaction">
    <interactant intactId="EBI-1993263">
        <id>Q8GWF1</id>
    </interactant>
    <interactant intactId="EBI-1993363">
        <id>Q9SAH7</id>
        <label>WRKY40</label>
    </interactant>
    <organismsDiffer>false</organismsDiffer>
    <experiments>6</experiments>
</comment>
<comment type="interaction">
    <interactant intactId="EBI-1993263">
        <id>Q8GWF1</id>
    </interactant>
    <interactant intactId="EBI-15202502">
        <id>Q8H0Y8</id>
        <label>WRKY41</label>
    </interactant>
    <organismsDiffer>false</organismsDiffer>
    <experiments>5</experiments>
</comment>
<comment type="interaction">
    <interactant intactId="EBI-1993263">
        <id>Q8GWF1</id>
    </interactant>
    <interactant intactId="EBI-25513118">
        <id>Q9C557</id>
        <label>WRKY64</label>
    </interactant>
    <organismsDiffer>false</organismsDiffer>
    <experiments>3</experiments>
</comment>
<comment type="subcellular location">
    <subcellularLocation>
        <location evidence="4">Nucleus</location>
    </subcellularLocation>
</comment>
<comment type="similarity">
    <text evidence="4">Belongs to the WRKY group III family.</text>
</comment>
<comment type="caution">
    <text evidence="4">It is uncertain whether Met-1 or Met-3 is the initiator.</text>
</comment>
<comment type="sequence caution" evidence="4">
    <conflict type="erroneous initiation">
        <sequence resource="EMBL-CDS" id="BAB09129"/>
    </conflict>
</comment>
<organism>
    <name type="scientific">Arabidopsis thaliana</name>
    <name type="common">Mouse-ear cress</name>
    <dbReference type="NCBI Taxonomy" id="3702"/>
    <lineage>
        <taxon>Eukaryota</taxon>
        <taxon>Viridiplantae</taxon>
        <taxon>Streptophyta</taxon>
        <taxon>Embryophyta</taxon>
        <taxon>Tracheophyta</taxon>
        <taxon>Spermatophyta</taxon>
        <taxon>Magnoliopsida</taxon>
        <taxon>eudicotyledons</taxon>
        <taxon>Gunneridae</taxon>
        <taxon>Pentapetalae</taxon>
        <taxon>rosids</taxon>
        <taxon>malvids</taxon>
        <taxon>Brassicales</taxon>
        <taxon>Brassicaceae</taxon>
        <taxon>Camelineae</taxon>
        <taxon>Arabidopsis</taxon>
    </lineage>
</organism>
<dbReference type="EMBL" id="AB012244">
    <property type="protein sequence ID" value="BAB09129.1"/>
    <property type="status" value="ALT_INIT"/>
    <property type="molecule type" value="Genomic_DNA"/>
</dbReference>
<dbReference type="EMBL" id="CP002688">
    <property type="protein sequence ID" value="AED93044.1"/>
    <property type="molecule type" value="Genomic_DNA"/>
</dbReference>
<dbReference type="EMBL" id="AK118884">
    <property type="protein sequence ID" value="BAC43469.1"/>
    <property type="molecule type" value="mRNA"/>
</dbReference>
<dbReference type="EMBL" id="BT005645">
    <property type="protein sequence ID" value="AAO64065.1"/>
    <property type="molecule type" value="mRNA"/>
</dbReference>
<dbReference type="EMBL" id="AF442395">
    <property type="protein sequence ID" value="AAL35288.1"/>
    <property type="molecule type" value="mRNA"/>
</dbReference>
<dbReference type="RefSeq" id="NP_197649.2">
    <property type="nucleotide sequence ID" value="NM_122163.3"/>
</dbReference>
<dbReference type="SMR" id="Q8GWF1"/>
<dbReference type="BioGRID" id="17595">
    <property type="interactions" value="16"/>
</dbReference>
<dbReference type="IntAct" id="Q8GWF1">
    <property type="interactions" value="17"/>
</dbReference>
<dbReference type="STRING" id="3702.Q8GWF1"/>
<dbReference type="PaxDb" id="3702-AT5G22570.1"/>
<dbReference type="ProteomicsDB" id="234288"/>
<dbReference type="EnsemblPlants" id="AT5G22570.1">
    <property type="protein sequence ID" value="AT5G22570.1"/>
    <property type="gene ID" value="AT5G22570"/>
</dbReference>
<dbReference type="GeneID" id="832320"/>
<dbReference type="Gramene" id="AT5G22570.1">
    <property type="protein sequence ID" value="AT5G22570.1"/>
    <property type="gene ID" value="AT5G22570"/>
</dbReference>
<dbReference type="KEGG" id="ath:AT5G22570"/>
<dbReference type="Araport" id="AT5G22570"/>
<dbReference type="TAIR" id="AT5G22570">
    <property type="gene designation" value="WRKY38"/>
</dbReference>
<dbReference type="HOGENOM" id="CLU_066547_1_0_1"/>
<dbReference type="InParanoid" id="Q8GWF1"/>
<dbReference type="OMA" id="HHICKIN"/>
<dbReference type="PhylomeDB" id="Q8GWF1"/>
<dbReference type="PRO" id="PR:Q8GWF1"/>
<dbReference type="Proteomes" id="UP000006548">
    <property type="component" value="Chromosome 5"/>
</dbReference>
<dbReference type="ExpressionAtlas" id="Q8GWF1">
    <property type="expression patterns" value="baseline and differential"/>
</dbReference>
<dbReference type="GO" id="GO:0005634">
    <property type="term" value="C:nucleus"/>
    <property type="evidence" value="ECO:0007669"/>
    <property type="project" value="UniProtKB-SubCell"/>
</dbReference>
<dbReference type="GO" id="GO:0003700">
    <property type="term" value="F:DNA-binding transcription factor activity"/>
    <property type="evidence" value="ECO:0000315"/>
    <property type="project" value="TAIR"/>
</dbReference>
<dbReference type="GO" id="GO:0000976">
    <property type="term" value="F:transcription cis-regulatory region binding"/>
    <property type="evidence" value="ECO:0000353"/>
    <property type="project" value="TAIR"/>
</dbReference>
<dbReference type="GO" id="GO:0042742">
    <property type="term" value="P:defense response to bacterium"/>
    <property type="evidence" value="ECO:0000315"/>
    <property type="project" value="TAIR"/>
</dbReference>
<dbReference type="GO" id="GO:0009863">
    <property type="term" value="P:salicylic acid mediated signaling pathway"/>
    <property type="evidence" value="ECO:0000315"/>
    <property type="project" value="TAIR"/>
</dbReference>
<dbReference type="Gene3D" id="2.20.25.80">
    <property type="entry name" value="WRKY domain"/>
    <property type="match status" value="1"/>
</dbReference>
<dbReference type="InterPro" id="IPR003657">
    <property type="entry name" value="WRKY_dom"/>
</dbReference>
<dbReference type="InterPro" id="IPR036576">
    <property type="entry name" value="WRKY_dom_sf"/>
</dbReference>
<dbReference type="InterPro" id="IPR044810">
    <property type="entry name" value="WRKY_plant"/>
</dbReference>
<dbReference type="PANTHER" id="PTHR31282">
    <property type="entry name" value="WRKY TRANSCRIPTION FACTOR 21-RELATED"/>
    <property type="match status" value="1"/>
</dbReference>
<dbReference type="Pfam" id="PF03106">
    <property type="entry name" value="WRKY"/>
    <property type="match status" value="1"/>
</dbReference>
<dbReference type="SMART" id="SM00774">
    <property type="entry name" value="WRKY"/>
    <property type="match status" value="1"/>
</dbReference>
<dbReference type="SUPFAM" id="SSF118290">
    <property type="entry name" value="WRKY DNA-binding domain"/>
    <property type="match status" value="1"/>
</dbReference>
<dbReference type="PROSITE" id="PS50811">
    <property type="entry name" value="WRKY"/>
    <property type="match status" value="1"/>
</dbReference>
<protein>
    <recommendedName>
        <fullName>Probable WRKY transcription factor 38</fullName>
    </recommendedName>
    <alternativeName>
        <fullName>WRKY DNA-binding protein 38</fullName>
    </alternativeName>
</protein>